<organism>
    <name type="scientific">Shigella sonnei (strain Ss046)</name>
    <dbReference type="NCBI Taxonomy" id="300269"/>
    <lineage>
        <taxon>Bacteria</taxon>
        <taxon>Pseudomonadati</taxon>
        <taxon>Pseudomonadota</taxon>
        <taxon>Gammaproteobacteria</taxon>
        <taxon>Enterobacterales</taxon>
        <taxon>Enterobacteriaceae</taxon>
        <taxon>Shigella</taxon>
    </lineage>
</organism>
<sequence length="193" mass="21221">MRLCDRDIEAWLDEGRLSINPRPPVERINGATVDVRLGNKFRTFRGHTAAFIDLSGPKDEVSAALDRVMSDEIVLDEGEAFYLHPGELALAVTLESVTLPADLVGWLDGRSSLARLGLMVHVTAHRIDPGWSGCIVLEFYNSGKLPLALRPGMLIGALSFEPLSGPAARPYNRREDAKYRNQQGAVASRIDKD</sequence>
<gene>
    <name evidence="1" type="primary">dcd</name>
    <name type="ordered locus">SSON_2118</name>
</gene>
<evidence type="ECO:0000255" key="1">
    <source>
        <dbReference type="HAMAP-Rule" id="MF_00146"/>
    </source>
</evidence>
<evidence type="ECO:0000256" key="2">
    <source>
        <dbReference type="SAM" id="MobiDB-lite"/>
    </source>
</evidence>
<comment type="function">
    <text evidence="1">Catalyzes the deamination of dCTP to dUTP.</text>
</comment>
<comment type="catalytic activity">
    <reaction evidence="1">
        <text>dCTP + H2O + H(+) = dUTP + NH4(+)</text>
        <dbReference type="Rhea" id="RHEA:22680"/>
        <dbReference type="ChEBI" id="CHEBI:15377"/>
        <dbReference type="ChEBI" id="CHEBI:15378"/>
        <dbReference type="ChEBI" id="CHEBI:28938"/>
        <dbReference type="ChEBI" id="CHEBI:61481"/>
        <dbReference type="ChEBI" id="CHEBI:61555"/>
        <dbReference type="EC" id="3.5.4.13"/>
    </reaction>
</comment>
<comment type="pathway">
    <text evidence="1">Pyrimidine metabolism; dUMP biosynthesis; dUMP from dCTP (dUTP route): step 1/2.</text>
</comment>
<comment type="subunit">
    <text evidence="1">Homotrimer.</text>
</comment>
<comment type="similarity">
    <text evidence="1">Belongs to the dCTP deaminase family.</text>
</comment>
<accession>Q3Z0D8</accession>
<keyword id="KW-0378">Hydrolase</keyword>
<keyword id="KW-0546">Nucleotide metabolism</keyword>
<keyword id="KW-0547">Nucleotide-binding</keyword>
<keyword id="KW-1185">Reference proteome</keyword>
<name>DCD_SHISS</name>
<proteinExistence type="inferred from homology"/>
<reference key="1">
    <citation type="journal article" date="2005" name="Nucleic Acids Res.">
        <title>Genome dynamics and diversity of Shigella species, the etiologic agents of bacillary dysentery.</title>
        <authorList>
            <person name="Yang F."/>
            <person name="Yang J."/>
            <person name="Zhang X."/>
            <person name="Chen L."/>
            <person name="Jiang Y."/>
            <person name="Yan Y."/>
            <person name="Tang X."/>
            <person name="Wang J."/>
            <person name="Xiong Z."/>
            <person name="Dong J."/>
            <person name="Xue Y."/>
            <person name="Zhu Y."/>
            <person name="Xu X."/>
            <person name="Sun L."/>
            <person name="Chen S."/>
            <person name="Nie H."/>
            <person name="Peng J."/>
            <person name="Xu J."/>
            <person name="Wang Y."/>
            <person name="Yuan Z."/>
            <person name="Wen Y."/>
            <person name="Yao Z."/>
            <person name="Shen Y."/>
            <person name="Qiang B."/>
            <person name="Hou Y."/>
            <person name="Yu J."/>
            <person name="Jin Q."/>
        </authorList>
    </citation>
    <scope>NUCLEOTIDE SEQUENCE [LARGE SCALE GENOMIC DNA]</scope>
    <source>
        <strain>Ss046</strain>
    </source>
</reference>
<dbReference type="EC" id="3.5.4.13" evidence="1"/>
<dbReference type="EMBL" id="CP000038">
    <property type="protein sequence ID" value="AAZ88774.1"/>
    <property type="molecule type" value="Genomic_DNA"/>
</dbReference>
<dbReference type="RefSeq" id="WP_001234767.1">
    <property type="nucleotide sequence ID" value="NC_007384.1"/>
</dbReference>
<dbReference type="SMR" id="Q3Z0D8"/>
<dbReference type="GeneID" id="93775126"/>
<dbReference type="KEGG" id="ssn:SSON_2118"/>
<dbReference type="HOGENOM" id="CLU_087476_2_0_6"/>
<dbReference type="UniPathway" id="UPA00610">
    <property type="reaction ID" value="UER00665"/>
</dbReference>
<dbReference type="Proteomes" id="UP000002529">
    <property type="component" value="Chromosome"/>
</dbReference>
<dbReference type="GO" id="GO:0008829">
    <property type="term" value="F:dCTP deaminase activity"/>
    <property type="evidence" value="ECO:0007669"/>
    <property type="project" value="UniProtKB-UniRule"/>
</dbReference>
<dbReference type="GO" id="GO:0000166">
    <property type="term" value="F:nucleotide binding"/>
    <property type="evidence" value="ECO:0007669"/>
    <property type="project" value="UniProtKB-KW"/>
</dbReference>
<dbReference type="GO" id="GO:0006226">
    <property type="term" value="P:dUMP biosynthetic process"/>
    <property type="evidence" value="ECO:0007669"/>
    <property type="project" value="UniProtKB-UniPathway"/>
</dbReference>
<dbReference type="GO" id="GO:0006229">
    <property type="term" value="P:dUTP biosynthetic process"/>
    <property type="evidence" value="ECO:0007669"/>
    <property type="project" value="UniProtKB-UniRule"/>
</dbReference>
<dbReference type="GO" id="GO:0015949">
    <property type="term" value="P:nucleobase-containing small molecule interconversion"/>
    <property type="evidence" value="ECO:0007669"/>
    <property type="project" value="TreeGrafter"/>
</dbReference>
<dbReference type="CDD" id="cd07557">
    <property type="entry name" value="trimeric_dUTPase"/>
    <property type="match status" value="1"/>
</dbReference>
<dbReference type="FunFam" id="2.70.40.10:FF:000003">
    <property type="entry name" value="dCTP deaminase"/>
    <property type="match status" value="1"/>
</dbReference>
<dbReference type="Gene3D" id="2.70.40.10">
    <property type="match status" value="1"/>
</dbReference>
<dbReference type="HAMAP" id="MF_00146">
    <property type="entry name" value="dCTP_deaminase"/>
    <property type="match status" value="1"/>
</dbReference>
<dbReference type="InterPro" id="IPR011962">
    <property type="entry name" value="dCTP_deaminase"/>
</dbReference>
<dbReference type="InterPro" id="IPR036157">
    <property type="entry name" value="dUTPase-like_sf"/>
</dbReference>
<dbReference type="InterPro" id="IPR033704">
    <property type="entry name" value="dUTPase_trimeric"/>
</dbReference>
<dbReference type="NCBIfam" id="TIGR02274">
    <property type="entry name" value="dCTP_deam"/>
    <property type="match status" value="1"/>
</dbReference>
<dbReference type="PANTHER" id="PTHR42680">
    <property type="entry name" value="DCTP DEAMINASE"/>
    <property type="match status" value="1"/>
</dbReference>
<dbReference type="PANTHER" id="PTHR42680:SF3">
    <property type="entry name" value="DCTP DEAMINASE"/>
    <property type="match status" value="1"/>
</dbReference>
<dbReference type="Pfam" id="PF22769">
    <property type="entry name" value="DCD"/>
    <property type="match status" value="1"/>
</dbReference>
<dbReference type="SUPFAM" id="SSF51283">
    <property type="entry name" value="dUTPase-like"/>
    <property type="match status" value="1"/>
</dbReference>
<protein>
    <recommendedName>
        <fullName evidence="1">dCTP deaminase</fullName>
        <ecNumber evidence="1">3.5.4.13</ecNumber>
    </recommendedName>
    <alternativeName>
        <fullName evidence="1">Deoxycytidine triphosphate deaminase</fullName>
    </alternativeName>
</protein>
<feature type="chain" id="PRO_1000009819" description="dCTP deaminase">
    <location>
        <begin position="1"/>
        <end position="193"/>
    </location>
</feature>
<feature type="region of interest" description="Disordered" evidence="2">
    <location>
        <begin position="169"/>
        <end position="193"/>
    </location>
</feature>
<feature type="active site" description="Proton donor/acceptor" evidence="1">
    <location>
        <position position="138"/>
    </location>
</feature>
<feature type="binding site" evidence="1">
    <location>
        <begin position="110"/>
        <end position="115"/>
    </location>
    <ligand>
        <name>dCTP</name>
        <dbReference type="ChEBI" id="CHEBI:61481"/>
    </ligand>
</feature>
<feature type="binding site" evidence="1">
    <location>
        <position position="128"/>
    </location>
    <ligand>
        <name>dCTP</name>
        <dbReference type="ChEBI" id="CHEBI:61481"/>
    </ligand>
</feature>
<feature type="binding site" evidence="1">
    <location>
        <begin position="136"/>
        <end position="138"/>
    </location>
    <ligand>
        <name>dCTP</name>
        <dbReference type="ChEBI" id="CHEBI:61481"/>
    </ligand>
</feature>
<feature type="binding site" evidence="1">
    <location>
        <position position="171"/>
    </location>
    <ligand>
        <name>dCTP</name>
        <dbReference type="ChEBI" id="CHEBI:61481"/>
    </ligand>
</feature>
<feature type="binding site" evidence="1">
    <location>
        <position position="178"/>
    </location>
    <ligand>
        <name>dCTP</name>
        <dbReference type="ChEBI" id="CHEBI:61481"/>
    </ligand>
</feature>
<feature type="binding site" evidence="1">
    <location>
        <position position="182"/>
    </location>
    <ligand>
        <name>dCTP</name>
        <dbReference type="ChEBI" id="CHEBI:61481"/>
    </ligand>
</feature>